<feature type="chain" id="PRO_0000403982" description="Actin-related protein 8">
    <location>
        <begin position="1"/>
        <end position="624"/>
    </location>
</feature>
<feature type="region of interest" description="Disordered" evidence="3">
    <location>
        <begin position="1"/>
        <end position="29"/>
    </location>
</feature>
<feature type="region of interest" description="Disordered" evidence="3">
    <location>
        <begin position="430"/>
        <end position="460"/>
    </location>
</feature>
<feature type="compositionally biased region" description="Basic and acidic residues" evidence="3">
    <location>
        <begin position="1"/>
        <end position="25"/>
    </location>
</feature>
<feature type="binding site" evidence="1">
    <location>
        <position position="55"/>
    </location>
    <ligand>
        <name>ATP</name>
        <dbReference type="ChEBI" id="CHEBI:30616"/>
    </ligand>
</feature>
<feature type="binding site" evidence="1">
    <location>
        <position position="56"/>
    </location>
    <ligand>
        <name>ATP</name>
        <dbReference type="ChEBI" id="CHEBI:30616"/>
    </ligand>
</feature>
<feature type="binding site" evidence="1">
    <location>
        <begin position="283"/>
        <end position="286"/>
    </location>
    <ligand>
        <name>ATP</name>
        <dbReference type="ChEBI" id="CHEBI:30616"/>
    </ligand>
</feature>
<feature type="modified residue" description="N-acetylmethionine" evidence="2">
    <location>
        <position position="1"/>
    </location>
</feature>
<feature type="modified residue" description="Phosphoserine" evidence="2">
    <location>
        <position position="132"/>
    </location>
</feature>
<feature type="modified residue" description="Phosphoserine" evidence="2">
    <location>
        <position position="412"/>
    </location>
</feature>
<sequence>MTQAEKGDAENGKEKGGEKEKEQRGVKRPIVPALVPESLQEQIQSNFIVVIHPGSTTLRIGRATDTLPASIPHVIARRHKQQGQPLYKDNWLLREGLNKPESNEQRQNGLKMVDQAIWSKKMSNGTRRIPVSPEQARSYNKQMRPAILDHCSGNKWTNTSHHPEFLVGEEALYVNPLDCYNIHWPIRRGQLNIHPGPGGSLTAVLADIEVIWSHAIQKYLEIPLKDLKYYRCILLIPDIYNKQHVKELVNMILMKMGFSGIVVHQESVCATFGSGLSSTCIVDVGDQKTSVCCVEDGVSHRNTRLCLAYGGSDVSRCFYWLMQRAGFPYRECQLTNKMDCLLLQHLKETFCHLDQDISGLQDHEFQIRHPDSPALLYQFRLGDEKLQAPMALFYPATFGIVGQKMTTLQHRSQGDPEDPHDEHYLLATQSKQEQSAKATADRKSASKPIGFEGDLRGQSSDLPERLHAQEVDLGSSQGDCLMAGNESEEALTALMSRKTAISLFEGKALGLDKAILHSIDCCSSDDTKKKMYSSILVVGGGLMFHKAQEFLQHRILNKMPPSFRRIIENVDVITRPKDMDPRLIAWKGGAVLACLDTTQELWIYQREWQRFGVRMLRERAAFVW</sequence>
<name>ARP8_AILME</name>
<organism>
    <name type="scientific">Ailuropoda melanoleuca</name>
    <name type="common">Giant panda</name>
    <dbReference type="NCBI Taxonomy" id="9646"/>
    <lineage>
        <taxon>Eukaryota</taxon>
        <taxon>Metazoa</taxon>
        <taxon>Chordata</taxon>
        <taxon>Craniata</taxon>
        <taxon>Vertebrata</taxon>
        <taxon>Euteleostomi</taxon>
        <taxon>Mammalia</taxon>
        <taxon>Eutheria</taxon>
        <taxon>Laurasiatheria</taxon>
        <taxon>Carnivora</taxon>
        <taxon>Caniformia</taxon>
        <taxon>Ursidae</taxon>
        <taxon>Ailuropoda</taxon>
    </lineage>
</organism>
<evidence type="ECO:0000250" key="1"/>
<evidence type="ECO:0000250" key="2">
    <source>
        <dbReference type="UniProtKB" id="Q9H981"/>
    </source>
</evidence>
<evidence type="ECO:0000256" key="3">
    <source>
        <dbReference type="SAM" id="MobiDB-lite"/>
    </source>
</evidence>
<evidence type="ECO:0000305" key="4"/>
<comment type="function">
    <text evidence="1">Plays an important role in the functional organization of mitotic chromosomes. Exhibits low basal ATPase activity, and unable to polymerize (By similarity).</text>
</comment>
<comment type="function">
    <text evidence="1">Proposed core component of the chromatin remodeling INO80 complex which is involved in transcriptional regulation, DNA replication and probably DNA repair. Required for the recruitment of INO80 (and probably the INO80 complex) to sites of DNA damage Strongly prefer nucleosomes and H3-H4 tetramers over H2A-H2B dimers, suggesting it may act as a nucleosome recognition module within the complex (By similarity).</text>
</comment>
<comment type="subunit">
    <text evidence="1">Component of the chromatin remodeling INO80 complex; specifically part of a complex module associated with the DBINO domain of INO80. Exists as monomers and dimers, but the dimer is most probably the biologically relevant form required for stable interactions with histones that exploits the twofold symmetry of the nucleosome core (By similarity).</text>
</comment>
<comment type="subcellular location">
    <subcellularLocation>
        <location evidence="1">Nucleus</location>
    </subcellularLocation>
    <subcellularLocation>
        <location evidence="1">Chromosome</location>
    </subcellularLocation>
    <text evidence="1">Specifically localizes to mitotic chromosomes.</text>
</comment>
<comment type="similarity">
    <text evidence="4">Belongs to the actin family. ARP8 subfamily.</text>
</comment>
<accession>D2I1E3</accession>
<reference key="1">
    <citation type="journal article" date="2010" name="Nature">
        <title>The sequence and de novo assembly of the giant panda genome.</title>
        <authorList>
            <person name="Li R."/>
            <person name="Fan W."/>
            <person name="Tian G."/>
            <person name="Zhu H."/>
            <person name="He L."/>
            <person name="Cai J."/>
            <person name="Huang Q."/>
            <person name="Cai Q."/>
            <person name="Li B."/>
            <person name="Bai Y."/>
            <person name="Zhang Z."/>
            <person name="Zhang Y."/>
            <person name="Wang W."/>
            <person name="Li J."/>
            <person name="Wei F."/>
            <person name="Li H."/>
            <person name="Jian M."/>
            <person name="Li J."/>
            <person name="Zhang Z."/>
            <person name="Nielsen R."/>
            <person name="Li D."/>
            <person name="Gu W."/>
            <person name="Yang Z."/>
            <person name="Xuan Z."/>
            <person name="Ryder O.A."/>
            <person name="Leung F.C."/>
            <person name="Zhou Y."/>
            <person name="Cao J."/>
            <person name="Sun X."/>
            <person name="Fu Y."/>
            <person name="Fang X."/>
            <person name="Guo X."/>
            <person name="Wang B."/>
            <person name="Hou R."/>
            <person name="Shen F."/>
            <person name="Mu B."/>
            <person name="Ni P."/>
            <person name="Lin R."/>
            <person name="Qian W."/>
            <person name="Wang G."/>
            <person name="Yu C."/>
            <person name="Nie W."/>
            <person name="Wang J."/>
            <person name="Wu Z."/>
            <person name="Liang H."/>
            <person name="Min J."/>
            <person name="Wu Q."/>
            <person name="Cheng S."/>
            <person name="Ruan J."/>
            <person name="Wang M."/>
            <person name="Shi Z."/>
            <person name="Wen M."/>
            <person name="Liu B."/>
            <person name="Ren X."/>
            <person name="Zheng H."/>
            <person name="Dong D."/>
            <person name="Cook K."/>
            <person name="Shan G."/>
            <person name="Zhang H."/>
            <person name="Kosiol C."/>
            <person name="Xie X."/>
            <person name="Lu Z."/>
            <person name="Zheng H."/>
            <person name="Li Y."/>
            <person name="Steiner C.C."/>
            <person name="Lam T.T."/>
            <person name="Lin S."/>
            <person name="Zhang Q."/>
            <person name="Li G."/>
            <person name="Tian J."/>
            <person name="Gong T."/>
            <person name="Liu H."/>
            <person name="Zhang D."/>
            <person name="Fang L."/>
            <person name="Ye C."/>
            <person name="Zhang J."/>
            <person name="Hu W."/>
            <person name="Xu A."/>
            <person name="Ren Y."/>
            <person name="Zhang G."/>
            <person name="Bruford M.W."/>
            <person name="Li Q."/>
            <person name="Ma L."/>
            <person name="Guo Y."/>
            <person name="An N."/>
            <person name="Hu Y."/>
            <person name="Zheng Y."/>
            <person name="Shi Y."/>
            <person name="Li Z."/>
            <person name="Liu Q."/>
            <person name="Chen Y."/>
            <person name="Zhao J."/>
            <person name="Qu N."/>
            <person name="Zhao S."/>
            <person name="Tian F."/>
            <person name="Wang X."/>
            <person name="Wang H."/>
            <person name="Xu L."/>
            <person name="Liu X."/>
            <person name="Vinar T."/>
            <person name="Wang Y."/>
            <person name="Lam T.W."/>
            <person name="Yiu S.M."/>
            <person name="Liu S."/>
            <person name="Zhang H."/>
            <person name="Li D."/>
            <person name="Huang Y."/>
            <person name="Wang X."/>
            <person name="Yang G."/>
            <person name="Jiang Z."/>
            <person name="Wang J."/>
            <person name="Qin N."/>
            <person name="Li L."/>
            <person name="Li J."/>
            <person name="Bolund L."/>
            <person name="Kristiansen K."/>
            <person name="Wong G.K."/>
            <person name="Olson M."/>
            <person name="Zhang X."/>
            <person name="Li S."/>
            <person name="Yang H."/>
            <person name="Wang J."/>
            <person name="Wang J."/>
        </authorList>
    </citation>
    <scope>NUCLEOTIDE SEQUENCE [LARGE SCALE GENOMIC DNA]</scope>
</reference>
<dbReference type="EMBL" id="GL193985">
    <property type="protein sequence ID" value="EFB14379.1"/>
    <property type="molecule type" value="Genomic_DNA"/>
</dbReference>
<dbReference type="RefSeq" id="XP_002929023.1">
    <property type="nucleotide sequence ID" value="XM_002928977.4"/>
</dbReference>
<dbReference type="SMR" id="D2I1E3"/>
<dbReference type="STRING" id="9646.ENSAMEP00000002587"/>
<dbReference type="Ensembl" id="ENSAMET00000002698.2">
    <property type="protein sequence ID" value="ENSAMEP00000002587.1"/>
    <property type="gene ID" value="ENSAMEG00000002430.2"/>
</dbReference>
<dbReference type="GeneID" id="100467196"/>
<dbReference type="KEGG" id="aml:100467196"/>
<dbReference type="CTD" id="93973"/>
<dbReference type="eggNOG" id="KOG0797">
    <property type="taxonomic scope" value="Eukaryota"/>
</dbReference>
<dbReference type="GeneTree" id="ENSGT00390000001763"/>
<dbReference type="HOGENOM" id="CLU_006974_1_0_1"/>
<dbReference type="InParanoid" id="D2I1E3"/>
<dbReference type="OMA" id="AYKCMWA"/>
<dbReference type="OrthoDB" id="5572108at2759"/>
<dbReference type="TreeFam" id="TF324575"/>
<dbReference type="Proteomes" id="UP000008912">
    <property type="component" value="Unassembled WGS sequence"/>
</dbReference>
<dbReference type="GO" id="GO:0005813">
    <property type="term" value="C:centrosome"/>
    <property type="evidence" value="ECO:0007669"/>
    <property type="project" value="Ensembl"/>
</dbReference>
<dbReference type="GO" id="GO:0031011">
    <property type="term" value="C:Ino80 complex"/>
    <property type="evidence" value="ECO:0007669"/>
    <property type="project" value="Ensembl"/>
</dbReference>
<dbReference type="GO" id="GO:0005654">
    <property type="term" value="C:nucleoplasm"/>
    <property type="evidence" value="ECO:0007669"/>
    <property type="project" value="Ensembl"/>
</dbReference>
<dbReference type="GO" id="GO:0005524">
    <property type="term" value="F:ATP binding"/>
    <property type="evidence" value="ECO:0007669"/>
    <property type="project" value="UniProtKB-KW"/>
</dbReference>
<dbReference type="GO" id="GO:0051301">
    <property type="term" value="P:cell division"/>
    <property type="evidence" value="ECO:0007669"/>
    <property type="project" value="UniProtKB-KW"/>
</dbReference>
<dbReference type="GO" id="GO:0006338">
    <property type="term" value="P:chromatin remodeling"/>
    <property type="evidence" value="ECO:0007669"/>
    <property type="project" value="Ensembl"/>
</dbReference>
<dbReference type="GO" id="GO:0006310">
    <property type="term" value="P:DNA recombination"/>
    <property type="evidence" value="ECO:0007669"/>
    <property type="project" value="UniProtKB-KW"/>
</dbReference>
<dbReference type="GO" id="GO:0006281">
    <property type="term" value="P:DNA repair"/>
    <property type="evidence" value="ECO:0007669"/>
    <property type="project" value="UniProtKB-KW"/>
</dbReference>
<dbReference type="GO" id="GO:0045739">
    <property type="term" value="P:positive regulation of DNA repair"/>
    <property type="evidence" value="ECO:0007669"/>
    <property type="project" value="Ensembl"/>
</dbReference>
<dbReference type="GO" id="GO:0045893">
    <property type="term" value="P:positive regulation of DNA-templated transcription"/>
    <property type="evidence" value="ECO:0007669"/>
    <property type="project" value="Ensembl"/>
</dbReference>
<dbReference type="GO" id="GO:1904507">
    <property type="term" value="P:positive regulation of telomere maintenance in response to DNA damage"/>
    <property type="evidence" value="ECO:0007669"/>
    <property type="project" value="Ensembl"/>
</dbReference>
<dbReference type="GO" id="GO:0051726">
    <property type="term" value="P:regulation of cell cycle"/>
    <property type="evidence" value="ECO:0007669"/>
    <property type="project" value="Ensembl"/>
</dbReference>
<dbReference type="GO" id="GO:0006275">
    <property type="term" value="P:regulation of DNA replication"/>
    <property type="evidence" value="ECO:0007669"/>
    <property type="project" value="Ensembl"/>
</dbReference>
<dbReference type="GO" id="GO:0060382">
    <property type="term" value="P:regulation of DNA strand elongation"/>
    <property type="evidence" value="ECO:0007669"/>
    <property type="project" value="Ensembl"/>
</dbReference>
<dbReference type="GO" id="GO:0045995">
    <property type="term" value="P:regulation of embryonic development"/>
    <property type="evidence" value="ECO:0007669"/>
    <property type="project" value="Ensembl"/>
</dbReference>
<dbReference type="GO" id="GO:0000723">
    <property type="term" value="P:telomere maintenance"/>
    <property type="evidence" value="ECO:0007669"/>
    <property type="project" value="Ensembl"/>
</dbReference>
<dbReference type="CDD" id="cd10206">
    <property type="entry name" value="ASKHA_NBD_Arp8-like"/>
    <property type="match status" value="1"/>
</dbReference>
<dbReference type="FunFam" id="3.30.420.40:FF:000100">
    <property type="entry name" value="Actin-related protein 8"/>
    <property type="match status" value="1"/>
</dbReference>
<dbReference type="FunFam" id="3.30.420.40:FF:000134">
    <property type="entry name" value="Actin-related protein 8"/>
    <property type="match status" value="1"/>
</dbReference>
<dbReference type="FunFam" id="3.90.640.10:FF:000020">
    <property type="entry name" value="Actin-related protein 8"/>
    <property type="match status" value="1"/>
</dbReference>
<dbReference type="Gene3D" id="2.30.36.90">
    <property type="match status" value="1"/>
</dbReference>
<dbReference type="Gene3D" id="3.30.420.40">
    <property type="match status" value="2"/>
</dbReference>
<dbReference type="Gene3D" id="3.90.640.10">
    <property type="entry name" value="Actin, Chain A, domain 4"/>
    <property type="match status" value="1"/>
</dbReference>
<dbReference type="InterPro" id="IPR004000">
    <property type="entry name" value="Actin"/>
</dbReference>
<dbReference type="InterPro" id="IPR043129">
    <property type="entry name" value="ATPase_NBD"/>
</dbReference>
<dbReference type="PANTHER" id="PTHR11937">
    <property type="entry name" value="ACTIN"/>
    <property type="match status" value="1"/>
</dbReference>
<dbReference type="Pfam" id="PF00022">
    <property type="entry name" value="Actin"/>
    <property type="match status" value="2"/>
</dbReference>
<dbReference type="SMART" id="SM00268">
    <property type="entry name" value="ACTIN"/>
    <property type="match status" value="1"/>
</dbReference>
<dbReference type="SUPFAM" id="SSF53067">
    <property type="entry name" value="Actin-like ATPase domain"/>
    <property type="match status" value="2"/>
</dbReference>
<gene>
    <name type="primary">ACTR8</name>
    <name type="synonym">ARP8</name>
    <name type="ORF">PANDA_019105</name>
</gene>
<keyword id="KW-0007">Acetylation</keyword>
<keyword id="KW-0067">ATP-binding</keyword>
<keyword id="KW-0131">Cell cycle</keyword>
<keyword id="KW-0132">Cell division</keyword>
<keyword id="KW-0158">Chromosome</keyword>
<keyword id="KW-0227">DNA damage</keyword>
<keyword id="KW-0233">DNA recombination</keyword>
<keyword id="KW-0234">DNA repair</keyword>
<keyword id="KW-0498">Mitosis</keyword>
<keyword id="KW-0547">Nucleotide-binding</keyword>
<keyword id="KW-0539">Nucleus</keyword>
<keyword id="KW-0597">Phosphoprotein</keyword>
<keyword id="KW-1185">Reference proteome</keyword>
<keyword id="KW-0804">Transcription</keyword>
<keyword id="KW-0805">Transcription regulation</keyword>
<protein>
    <recommendedName>
        <fullName>Actin-related protein 8</fullName>
    </recommendedName>
</protein>
<proteinExistence type="inferred from homology"/>